<organism>
    <name type="scientific">Brucella melitensis biotype 1 (strain ATCC 23456 / CCUG 17765 / NCTC 10094 / 16M)</name>
    <dbReference type="NCBI Taxonomy" id="224914"/>
    <lineage>
        <taxon>Bacteria</taxon>
        <taxon>Pseudomonadati</taxon>
        <taxon>Pseudomonadota</taxon>
        <taxon>Alphaproteobacteria</taxon>
        <taxon>Hyphomicrobiales</taxon>
        <taxon>Brucellaceae</taxon>
        <taxon>Brucella/Ochrobactrum group</taxon>
        <taxon>Brucella</taxon>
    </lineage>
</organism>
<feature type="chain" id="PRO_0000284087" description="Probable ABC transporter permease protein BMEII0107">
    <location>
        <begin position="1"/>
        <end position="246"/>
    </location>
</feature>
<feature type="transmembrane region" description="Helical" evidence="1">
    <location>
        <begin position="12"/>
        <end position="32"/>
    </location>
</feature>
<feature type="transmembrane region" description="Helical" evidence="1">
    <location>
        <begin position="63"/>
        <end position="83"/>
    </location>
</feature>
<feature type="transmembrane region" description="Helical" evidence="1">
    <location>
        <begin position="94"/>
        <end position="114"/>
    </location>
</feature>
<feature type="transmembrane region" description="Helical" evidence="1">
    <location>
        <begin position="122"/>
        <end position="142"/>
    </location>
</feature>
<feature type="transmembrane region" description="Helical" evidence="1">
    <location>
        <begin position="172"/>
        <end position="192"/>
    </location>
</feature>
<feature type="transmembrane region" description="Helical" evidence="1">
    <location>
        <begin position="211"/>
        <end position="231"/>
    </location>
</feature>
<feature type="domain" description="ABC transmembrane type-1" evidence="1">
    <location>
        <begin position="56"/>
        <end position="236"/>
    </location>
</feature>
<name>Y3107_BRUME</name>
<protein>
    <recommendedName>
        <fullName>Probable ABC transporter permease protein BMEII0107</fullName>
    </recommendedName>
</protein>
<accession>Q8YDR8</accession>
<keyword id="KW-0997">Cell inner membrane</keyword>
<keyword id="KW-1003">Cell membrane</keyword>
<keyword id="KW-0472">Membrane</keyword>
<keyword id="KW-0812">Transmembrane</keyword>
<keyword id="KW-1133">Transmembrane helix</keyword>
<keyword id="KW-0813">Transport</keyword>
<gene>
    <name type="ordered locus">BMEII0107</name>
</gene>
<reference key="1">
    <citation type="journal article" date="2002" name="Proc. Natl. Acad. Sci. U.S.A.">
        <title>The genome sequence of the facultative intracellular pathogen Brucella melitensis.</title>
        <authorList>
            <person name="DelVecchio V.G."/>
            <person name="Kapatral V."/>
            <person name="Redkar R.J."/>
            <person name="Patra G."/>
            <person name="Mujer C."/>
            <person name="Los T."/>
            <person name="Ivanova N."/>
            <person name="Anderson I."/>
            <person name="Bhattacharyya A."/>
            <person name="Lykidis A."/>
            <person name="Reznik G."/>
            <person name="Jablonski L."/>
            <person name="Larsen N."/>
            <person name="D'Souza M."/>
            <person name="Bernal A."/>
            <person name="Mazur M."/>
            <person name="Goltsman E."/>
            <person name="Selkov E."/>
            <person name="Elzer P.H."/>
            <person name="Hagius S."/>
            <person name="O'Callaghan D."/>
            <person name="Letesson J.-J."/>
            <person name="Haselkorn R."/>
            <person name="Kyrpides N.C."/>
            <person name="Overbeek R."/>
        </authorList>
    </citation>
    <scope>NUCLEOTIDE SEQUENCE [LARGE SCALE GENOMIC DNA]</scope>
    <source>
        <strain>ATCC 23456 / CCUG 17765 / NCTC 10094 / 16M</strain>
    </source>
</reference>
<dbReference type="EMBL" id="AE008918">
    <property type="protein sequence ID" value="AAL53348.1"/>
    <property type="molecule type" value="Genomic_DNA"/>
</dbReference>
<dbReference type="PIR" id="AI3522">
    <property type="entry name" value="AI3522"/>
</dbReference>
<dbReference type="RefSeq" id="WP_004681091.1">
    <property type="nucleotide sequence ID" value="NZ_GG703779.1"/>
</dbReference>
<dbReference type="SMR" id="Q8YDR8"/>
<dbReference type="GeneID" id="29595721"/>
<dbReference type="KEGG" id="bme:BMEII0107"/>
<dbReference type="KEGG" id="bmel:DK63_3138"/>
<dbReference type="PATRIC" id="fig|224914.52.peg.3286"/>
<dbReference type="eggNOG" id="COG0600">
    <property type="taxonomic scope" value="Bacteria"/>
</dbReference>
<dbReference type="PhylomeDB" id="Q8YDR8"/>
<dbReference type="Proteomes" id="UP000000419">
    <property type="component" value="Chromosome II"/>
</dbReference>
<dbReference type="GO" id="GO:0005886">
    <property type="term" value="C:plasma membrane"/>
    <property type="evidence" value="ECO:0007669"/>
    <property type="project" value="UniProtKB-SubCell"/>
</dbReference>
<dbReference type="GO" id="GO:0055085">
    <property type="term" value="P:transmembrane transport"/>
    <property type="evidence" value="ECO:0007669"/>
    <property type="project" value="InterPro"/>
</dbReference>
<dbReference type="CDD" id="cd06261">
    <property type="entry name" value="TM_PBP2"/>
    <property type="match status" value="1"/>
</dbReference>
<dbReference type="FunFam" id="1.10.3720.10:FF:000003">
    <property type="entry name" value="Aliphatic sulfonate ABC transporter permease"/>
    <property type="match status" value="1"/>
</dbReference>
<dbReference type="Gene3D" id="1.10.3720.10">
    <property type="entry name" value="MetI-like"/>
    <property type="match status" value="1"/>
</dbReference>
<dbReference type="InterPro" id="IPR000515">
    <property type="entry name" value="MetI-like"/>
</dbReference>
<dbReference type="InterPro" id="IPR035906">
    <property type="entry name" value="MetI-like_sf"/>
</dbReference>
<dbReference type="PANTHER" id="PTHR30151:SF0">
    <property type="entry name" value="ABC TRANSPORTER PERMEASE PROTEIN MJ0413-RELATED"/>
    <property type="match status" value="1"/>
</dbReference>
<dbReference type="PANTHER" id="PTHR30151">
    <property type="entry name" value="ALKANE SULFONATE ABC TRANSPORTER-RELATED, MEMBRANE SUBUNIT"/>
    <property type="match status" value="1"/>
</dbReference>
<dbReference type="Pfam" id="PF00528">
    <property type="entry name" value="BPD_transp_1"/>
    <property type="match status" value="1"/>
</dbReference>
<dbReference type="SUPFAM" id="SSF161098">
    <property type="entry name" value="MetI-like"/>
    <property type="match status" value="1"/>
</dbReference>
<dbReference type="PROSITE" id="PS50928">
    <property type="entry name" value="ABC_TM1"/>
    <property type="match status" value="1"/>
</dbReference>
<proteinExistence type="inferred from homology"/>
<sequence>MNARLTGLGLNLLSFAVGIGGWYLLTATGAVVLPGPVDVLERAVTLLLNGQLVGDIFASLRRVLSGFVLGVALAIPVGFLMGWYRIARSLIEPWVQFFRMIPPLAVIPLAIVTLGIDESPKIFVIFLASFLSSVVATYQGVISVDRTLINAARVLGAKDATIFARVIVPASVPFILVGVRIGLGSAWATVVAAELIAAQSGLGYRMQQAQLYYDLPTIFVSLVTIGILGLFMDRLLQAADRRLTQW</sequence>
<evidence type="ECO:0000255" key="1">
    <source>
        <dbReference type="PROSITE-ProRule" id="PRU00441"/>
    </source>
</evidence>
<evidence type="ECO:0000305" key="2"/>
<comment type="function">
    <text evidence="2">Probably part of an ABC transporter complex. Probably responsible for the translocation of the substrate across the membrane (Probable).</text>
</comment>
<comment type="subunit">
    <text evidence="2">The complex is composed of two ATP-binding proteins (BMEII0108), two transmembrane proteins (BMEII0107) and a solute-binding protein (BMEII0109).</text>
</comment>
<comment type="subcellular location">
    <subcellularLocation>
        <location evidence="2">Cell inner membrane</location>
        <topology evidence="1">Multi-pass membrane protein</topology>
    </subcellularLocation>
</comment>
<comment type="similarity">
    <text evidence="2">Belongs to the binding-protein-dependent transport system permease family.</text>
</comment>